<accession>Q73M29</accession>
<evidence type="ECO:0000255" key="1">
    <source>
        <dbReference type="HAMAP-Rule" id="MF_00310"/>
    </source>
</evidence>
<keyword id="KW-0066">ATP synthesis</keyword>
<keyword id="KW-0375">Hydrogen ion transport</keyword>
<keyword id="KW-0406">Ion transport</keyword>
<keyword id="KW-1185">Reference proteome</keyword>
<keyword id="KW-0813">Transport</keyword>
<protein>
    <recommendedName>
        <fullName evidence="1">V-type ATP synthase beta chain</fullName>
    </recommendedName>
    <alternativeName>
        <fullName evidence="1">V-ATPase subunit B</fullName>
    </alternativeName>
</protein>
<proteinExistence type="inferred from homology"/>
<sequence>MKKVYSKIESINGSVITVKADGVSYGELAEVQTRFGASLAEVNKLEGDLVSLQVFAGGRGVSTGDEVRFLGKEMQVSYSEDLLGRIFNGSGDPRDSGPALKDNMIPIGGPSVNPSKRILANRMIRTGIPMIDVFNTLVVSQKLPIFSSSGEPYNELLARIAMQAEVDVIILGGMGLKYDDYLYFKDTLEEAGALSRTAMFVHTAADPTVECLMIPDMCLAVAEKFAIAGKNVLVLLTDMTNFADAMKEIAIIQEQVPSNRGYPGDLYSQLAARYEKAVDFADAGSVTVLAVTTMPGDDVTHPVPDNTGYITEGQFYLKNGRIEPFGSLSRLKQNVNGKTRDDHRALMDNMIKLYASYKDTLEKKSMGFMMSEWDEKLLKYGAKFESGMMDLSVNIPLEDALNLGWKILAECFTREETGIKSELVNKYWPAN</sequence>
<comment type="function">
    <text evidence="1">Produces ATP from ADP in the presence of a proton gradient across the membrane. The V-type beta chain is a regulatory subunit.</text>
</comment>
<comment type="similarity">
    <text evidence="1">Belongs to the ATPase alpha/beta chains family.</text>
</comment>
<reference key="1">
    <citation type="journal article" date="2004" name="Proc. Natl. Acad. Sci. U.S.A.">
        <title>Comparison of the genome of the oral pathogen Treponema denticola with other spirochete genomes.</title>
        <authorList>
            <person name="Seshadri R."/>
            <person name="Myers G.S.A."/>
            <person name="Tettelin H."/>
            <person name="Eisen J.A."/>
            <person name="Heidelberg J.F."/>
            <person name="Dodson R.J."/>
            <person name="Davidsen T.M."/>
            <person name="DeBoy R.T."/>
            <person name="Fouts D.E."/>
            <person name="Haft D.H."/>
            <person name="Selengut J."/>
            <person name="Ren Q."/>
            <person name="Brinkac L.M."/>
            <person name="Madupu R."/>
            <person name="Kolonay J.F."/>
            <person name="Durkin S.A."/>
            <person name="Daugherty S.C."/>
            <person name="Shetty J."/>
            <person name="Shvartsbeyn A."/>
            <person name="Gebregeorgis E."/>
            <person name="Geer K."/>
            <person name="Tsegaye G."/>
            <person name="Malek J.A."/>
            <person name="Ayodeji B."/>
            <person name="Shatsman S."/>
            <person name="McLeod M.P."/>
            <person name="Smajs D."/>
            <person name="Howell J.K."/>
            <person name="Pal S."/>
            <person name="Amin A."/>
            <person name="Vashisth P."/>
            <person name="McNeill T.Z."/>
            <person name="Xiang Q."/>
            <person name="Sodergren E."/>
            <person name="Baca E."/>
            <person name="Weinstock G.M."/>
            <person name="Norris S.J."/>
            <person name="Fraser C.M."/>
            <person name="Paulsen I.T."/>
        </authorList>
    </citation>
    <scope>NUCLEOTIDE SEQUENCE [LARGE SCALE GENOMIC DNA]</scope>
    <source>
        <strain>ATCC 35405 / DSM 14222 / CIP 103919 / JCM 8153 / KCTC 15104</strain>
    </source>
</reference>
<name>VATB_TREDE</name>
<organism>
    <name type="scientific">Treponema denticola (strain ATCC 35405 / DSM 14222 / CIP 103919 / JCM 8153 / KCTC 15104)</name>
    <dbReference type="NCBI Taxonomy" id="243275"/>
    <lineage>
        <taxon>Bacteria</taxon>
        <taxon>Pseudomonadati</taxon>
        <taxon>Spirochaetota</taxon>
        <taxon>Spirochaetia</taxon>
        <taxon>Spirochaetales</taxon>
        <taxon>Treponemataceae</taxon>
        <taxon>Treponema</taxon>
    </lineage>
</organism>
<gene>
    <name evidence="1" type="primary">atpB</name>
    <name type="ordered locus">TDE_1682</name>
</gene>
<dbReference type="EMBL" id="AE017226">
    <property type="protein sequence ID" value="AAS12197.1"/>
    <property type="molecule type" value="Genomic_DNA"/>
</dbReference>
<dbReference type="RefSeq" id="NP_972286.1">
    <property type="nucleotide sequence ID" value="NC_002967.9"/>
</dbReference>
<dbReference type="RefSeq" id="WP_002669361.1">
    <property type="nucleotide sequence ID" value="NC_002967.9"/>
</dbReference>
<dbReference type="SMR" id="Q73M29"/>
<dbReference type="STRING" id="243275.TDE_1682"/>
<dbReference type="PaxDb" id="243275-TDE_1682"/>
<dbReference type="GeneID" id="2740137"/>
<dbReference type="KEGG" id="tde:TDE_1682"/>
<dbReference type="PATRIC" id="fig|243275.7.peg.1609"/>
<dbReference type="eggNOG" id="COG1156">
    <property type="taxonomic scope" value="Bacteria"/>
</dbReference>
<dbReference type="HOGENOM" id="CLU_022916_2_0_12"/>
<dbReference type="OrthoDB" id="9802718at2"/>
<dbReference type="Proteomes" id="UP000008212">
    <property type="component" value="Chromosome"/>
</dbReference>
<dbReference type="GO" id="GO:0005524">
    <property type="term" value="F:ATP binding"/>
    <property type="evidence" value="ECO:0007669"/>
    <property type="project" value="UniProtKB-UniRule"/>
</dbReference>
<dbReference type="GO" id="GO:0046933">
    <property type="term" value="F:proton-transporting ATP synthase activity, rotational mechanism"/>
    <property type="evidence" value="ECO:0007669"/>
    <property type="project" value="UniProtKB-UniRule"/>
</dbReference>
<dbReference type="GO" id="GO:0042777">
    <property type="term" value="P:proton motive force-driven plasma membrane ATP synthesis"/>
    <property type="evidence" value="ECO:0007669"/>
    <property type="project" value="UniProtKB-UniRule"/>
</dbReference>
<dbReference type="CDD" id="cd01135">
    <property type="entry name" value="V_A-ATPase_B"/>
    <property type="match status" value="1"/>
</dbReference>
<dbReference type="Gene3D" id="3.40.50.12240">
    <property type="match status" value="1"/>
</dbReference>
<dbReference type="HAMAP" id="MF_00310">
    <property type="entry name" value="ATP_synth_B_arch"/>
    <property type="match status" value="1"/>
</dbReference>
<dbReference type="InterPro" id="IPR055190">
    <property type="entry name" value="ATP-synt_VA_C"/>
</dbReference>
<dbReference type="InterPro" id="IPR004100">
    <property type="entry name" value="ATPase_F1/V1/A1_a/bsu_N"/>
</dbReference>
<dbReference type="InterPro" id="IPR000194">
    <property type="entry name" value="ATPase_F1/V1/A1_a/bsu_nucl-bd"/>
</dbReference>
<dbReference type="InterPro" id="IPR027417">
    <property type="entry name" value="P-loop_NTPase"/>
</dbReference>
<dbReference type="InterPro" id="IPR022879">
    <property type="entry name" value="V-ATPase_su_B/beta"/>
</dbReference>
<dbReference type="NCBIfam" id="NF002555">
    <property type="entry name" value="PRK02118.1"/>
    <property type="match status" value="1"/>
</dbReference>
<dbReference type="NCBIfam" id="NF003235">
    <property type="entry name" value="PRK04196.1"/>
    <property type="match status" value="1"/>
</dbReference>
<dbReference type="PANTHER" id="PTHR43389">
    <property type="entry name" value="V-TYPE PROTON ATPASE SUBUNIT B"/>
    <property type="match status" value="1"/>
</dbReference>
<dbReference type="PANTHER" id="PTHR43389:SF4">
    <property type="entry name" value="V-TYPE PROTON ATPASE SUBUNIT B"/>
    <property type="match status" value="1"/>
</dbReference>
<dbReference type="Pfam" id="PF00006">
    <property type="entry name" value="ATP-synt_ab"/>
    <property type="match status" value="1"/>
</dbReference>
<dbReference type="Pfam" id="PF02874">
    <property type="entry name" value="ATP-synt_ab_N"/>
    <property type="match status" value="1"/>
</dbReference>
<dbReference type="Pfam" id="PF22919">
    <property type="entry name" value="ATP-synt_VA_C"/>
    <property type="match status" value="1"/>
</dbReference>
<dbReference type="SUPFAM" id="SSF52540">
    <property type="entry name" value="P-loop containing nucleoside triphosphate hydrolases"/>
    <property type="match status" value="1"/>
</dbReference>
<feature type="chain" id="PRO_1000059399" description="V-type ATP synthase beta chain">
    <location>
        <begin position="1"/>
        <end position="431"/>
    </location>
</feature>